<protein>
    <recommendedName>
        <fullName>Isoaspartyl peptidase</fullName>
        <ecNumber>3.4.19.5</ecNumber>
    </recommendedName>
    <alternativeName>
        <fullName>Beta-aspartyl-peptidase</fullName>
    </alternativeName>
    <alternativeName>
        <fullName>Isoaspartyl dipeptidase</fullName>
    </alternativeName>
    <component>
        <recommendedName>
            <fullName>Isoaspartyl peptidase subunit alpha</fullName>
        </recommendedName>
    </component>
    <component>
        <recommendedName>
            <fullName>Isoaspartyl peptidase subunit beta</fullName>
        </recommendedName>
    </component>
</protein>
<gene>
    <name type="primary">iaaA</name>
    <name type="ordered locus">STM0847</name>
</gene>
<dbReference type="EC" id="3.4.19.5"/>
<dbReference type="EMBL" id="AE006468">
    <property type="protein sequence ID" value="AAL19783.1"/>
    <property type="molecule type" value="Genomic_DNA"/>
</dbReference>
<dbReference type="RefSeq" id="WP_001030503.1">
    <property type="nucleotide sequence ID" value="NC_003197.2"/>
</dbReference>
<dbReference type="SMR" id="Q7CQV5"/>
<dbReference type="STRING" id="99287.STM0847"/>
<dbReference type="PaxDb" id="99287-STM0847"/>
<dbReference type="KEGG" id="stm:STM0847"/>
<dbReference type="PATRIC" id="fig|99287.12.peg.884"/>
<dbReference type="HOGENOM" id="CLU_021603_1_0_6"/>
<dbReference type="OMA" id="MGIIMVD"/>
<dbReference type="PhylomeDB" id="Q7CQV5"/>
<dbReference type="BioCyc" id="SENT99287:STM0847-MONOMER"/>
<dbReference type="Proteomes" id="UP000001014">
    <property type="component" value="Chromosome"/>
</dbReference>
<dbReference type="GO" id="GO:0004067">
    <property type="term" value="F:asparaginase activity"/>
    <property type="evidence" value="ECO:0000318"/>
    <property type="project" value="GO_Central"/>
</dbReference>
<dbReference type="GO" id="GO:0008798">
    <property type="term" value="F:beta-aspartyl-peptidase activity"/>
    <property type="evidence" value="ECO:0000318"/>
    <property type="project" value="GO_Central"/>
</dbReference>
<dbReference type="GO" id="GO:0006508">
    <property type="term" value="P:proteolysis"/>
    <property type="evidence" value="ECO:0007669"/>
    <property type="project" value="UniProtKB-KW"/>
</dbReference>
<dbReference type="CDD" id="cd04701">
    <property type="entry name" value="Asparaginase_2"/>
    <property type="match status" value="1"/>
</dbReference>
<dbReference type="FunFam" id="3.60.20.30:FF:000001">
    <property type="entry name" value="Isoaspartyl peptidase/L-asparaginase"/>
    <property type="match status" value="1"/>
</dbReference>
<dbReference type="Gene3D" id="3.60.20.30">
    <property type="entry name" value="(Glycosyl)asparaginase"/>
    <property type="match status" value="1"/>
</dbReference>
<dbReference type="InterPro" id="IPR029055">
    <property type="entry name" value="Ntn_hydrolases_N"/>
</dbReference>
<dbReference type="InterPro" id="IPR000246">
    <property type="entry name" value="Peptidase_T2"/>
</dbReference>
<dbReference type="NCBIfam" id="NF007589">
    <property type="entry name" value="PRK10226.1"/>
    <property type="match status" value="1"/>
</dbReference>
<dbReference type="PANTHER" id="PTHR10188">
    <property type="entry name" value="L-ASPARAGINASE"/>
    <property type="match status" value="1"/>
</dbReference>
<dbReference type="PANTHER" id="PTHR10188:SF6">
    <property type="entry name" value="N(4)-(BETA-N-ACETYLGLUCOSAMINYL)-L-ASPARAGINASE"/>
    <property type="match status" value="1"/>
</dbReference>
<dbReference type="Pfam" id="PF01112">
    <property type="entry name" value="Asparaginase_2"/>
    <property type="match status" value="1"/>
</dbReference>
<dbReference type="SUPFAM" id="SSF56235">
    <property type="entry name" value="N-terminal nucleophile aminohydrolases (Ntn hydrolases)"/>
    <property type="match status" value="1"/>
</dbReference>
<name>IAAA_SALTY</name>
<accession>Q7CQV5</accession>
<evidence type="ECO:0000250" key="1"/>
<evidence type="ECO:0000269" key="2">
    <source>
    </source>
</evidence>
<evidence type="ECO:0000305" key="3"/>
<keyword id="KW-0068">Autocatalytic cleavage</keyword>
<keyword id="KW-0903">Direct protein sequencing</keyword>
<keyword id="KW-0378">Hydrolase</keyword>
<keyword id="KW-0645">Protease</keyword>
<keyword id="KW-1185">Reference proteome</keyword>
<organism>
    <name type="scientific">Salmonella typhimurium (strain LT2 / SGSC1412 / ATCC 700720)</name>
    <dbReference type="NCBI Taxonomy" id="99287"/>
    <lineage>
        <taxon>Bacteria</taxon>
        <taxon>Pseudomonadati</taxon>
        <taxon>Pseudomonadota</taxon>
        <taxon>Gammaproteobacteria</taxon>
        <taxon>Enterobacterales</taxon>
        <taxon>Enterobacteriaceae</taxon>
        <taxon>Salmonella</taxon>
    </lineage>
</organism>
<feature type="chain" id="PRO_0000344061" description="Isoaspartyl peptidase subunit alpha">
    <location>
        <begin position="1"/>
        <end position="178"/>
    </location>
</feature>
<feature type="chain" id="PRO_0000344062" description="Isoaspartyl peptidase subunit beta">
    <location>
        <begin position="179"/>
        <end position="313"/>
    </location>
</feature>
<feature type="active site" description="Nucleophile" evidence="1">
    <location>
        <position position="179"/>
    </location>
</feature>
<feature type="binding site" evidence="1">
    <location>
        <begin position="207"/>
        <end position="210"/>
    </location>
    <ligand>
        <name>substrate</name>
    </ligand>
</feature>
<feature type="binding site" evidence="1">
    <location>
        <begin position="230"/>
        <end position="233"/>
    </location>
    <ligand>
        <name>substrate</name>
    </ligand>
</feature>
<feature type="site" description="Cleavage; by autolysis">
    <location>
        <begin position="178"/>
        <end position="179"/>
    </location>
</feature>
<sequence>MNKAVIAIHGGAGAIARAQMSHEQELRYIQALSEIVESGQKMLEAGDSALDVVTEAVRLLEACPLFNAGIGAVYTRDGTHELDACVMDGNTLKAGAVAGVSHVRHPVLAARLVMERSPHVLMVGEGAENFAFSQGMARVSPDIFSTPARYEQLLAARAAGEMALDHSGAPLDETKKMGTVGAVARDKFGNLAAATSTGGMTNKLPGRVGDSPLVGAGCYANNASVAVSCTGTGEVFIRTLAAYDIAALMEYGGLSLADACERVVMEKLPALGGSGGLIAVDHEGNVALPFNSEGMYRAWGYAGDTPTTGIYRE</sequence>
<reference key="1">
    <citation type="journal article" date="2001" name="J. Bacteriol.">
        <title>Aspartic peptide hydrolases in Salmonella enterica serovar typhimurium.</title>
        <authorList>
            <person name="Larsen R.A."/>
            <person name="Knox T.M."/>
            <person name="Miller C.G."/>
        </authorList>
    </citation>
    <scope>NUCLEOTIDE SEQUENCE [GENOMIC DNA]</scope>
    <scope>PROTEIN SEQUENCE OF 1-10 AND 179-188</scope>
    <scope>AUTOCATALYTIC CLEAVAGE</scope>
    <scope>MASS SPECTROMETRY</scope>
    <scope>FUNCTION</scope>
    <source>
        <strain>LT2 / SGSC1412 / ATCC 700720</strain>
    </source>
</reference>
<reference key="2">
    <citation type="journal article" date="2001" name="Nature">
        <title>Complete genome sequence of Salmonella enterica serovar Typhimurium LT2.</title>
        <authorList>
            <person name="McClelland M."/>
            <person name="Sanderson K.E."/>
            <person name="Spieth J."/>
            <person name="Clifton S.W."/>
            <person name="Latreille P."/>
            <person name="Courtney L."/>
            <person name="Porwollik S."/>
            <person name="Ali J."/>
            <person name="Dante M."/>
            <person name="Du F."/>
            <person name="Hou S."/>
            <person name="Layman D."/>
            <person name="Leonard S."/>
            <person name="Nguyen C."/>
            <person name="Scott K."/>
            <person name="Holmes A."/>
            <person name="Grewal N."/>
            <person name="Mulvaney E."/>
            <person name="Ryan E."/>
            <person name="Sun H."/>
            <person name="Florea L."/>
            <person name="Miller W."/>
            <person name="Stoneking T."/>
            <person name="Nhan M."/>
            <person name="Waterston R."/>
            <person name="Wilson R.K."/>
        </authorList>
    </citation>
    <scope>NUCLEOTIDE SEQUENCE [LARGE SCALE GENOMIC DNA]</scope>
    <source>
        <strain>LT2 / SGSC1412 / ATCC 700720</strain>
    </source>
</reference>
<comment type="function">
    <text evidence="2">Degrades proteins damaged by L-isoaspartyl residue formation (also known as beta-Asp residues). Degrades L-isoaspartyl-containing di- and tripeptides. Acts best on iso-Asp-Leu, followed by iso-Asp-Ala, -His and to a lesser extent iso-Asp-Lys, -Phe and iso-Asp-Leu-Ala. Does not act on internal iso-Asp bonds (Als-iso-Asp-Leu-Ala). Does not act on alpha-Asp bonds. Has poor L-asparaginase activity.</text>
</comment>
<comment type="catalytic activity">
    <reaction>
        <text>Cleavage of a beta-linked Asp residue from the N-terminus of a polypeptide.</text>
        <dbReference type="EC" id="3.4.19.5"/>
    </reaction>
</comment>
<comment type="subunit">
    <text evidence="3">Heterotetramer of two alpha and two beta chains arranged as a dimer of alpha/beta heterodimers.</text>
</comment>
<comment type="PTM">
    <text>Autocleaved. Generates the alpha and beta subunits. The beta subunit is thought to be responsible for the nucleophile hydrolase activity.</text>
</comment>
<comment type="mass spectrometry">
    <molecule>Isoaspartyl peptidase subunit alpha</molecule>
    <text>Subunit alpha.</text>
</comment>
<comment type="mass spectrometry">
    <molecule>Isoaspartyl peptidase subunit beta</molecule>
    <text>Subunit beta.</text>
</comment>
<comment type="similarity">
    <text evidence="3">Belongs to the Ntn-hydrolase family.</text>
</comment>
<proteinExistence type="evidence at protein level"/>